<gene>
    <name evidence="1" type="primary">pyrC</name>
    <name type="ordered locus">YPTB2482</name>
</gene>
<keyword id="KW-0378">Hydrolase</keyword>
<keyword id="KW-0479">Metal-binding</keyword>
<keyword id="KW-0665">Pyrimidine biosynthesis</keyword>
<keyword id="KW-0862">Zinc</keyword>
<feature type="chain" id="PRO_1000024077" description="Dihydroorotase">
    <location>
        <begin position="1"/>
        <end position="348"/>
    </location>
</feature>
<feature type="active site" evidence="1">
    <location>
        <position position="251"/>
    </location>
</feature>
<feature type="binding site" evidence="1">
    <location>
        <position position="17"/>
    </location>
    <ligand>
        <name>Zn(2+)</name>
        <dbReference type="ChEBI" id="CHEBI:29105"/>
        <label>1</label>
    </ligand>
</feature>
<feature type="binding site" evidence="1">
    <location>
        <begin position="19"/>
        <end position="21"/>
    </location>
    <ligand>
        <name>substrate</name>
    </ligand>
</feature>
<feature type="binding site" evidence="1">
    <location>
        <position position="19"/>
    </location>
    <ligand>
        <name>Zn(2+)</name>
        <dbReference type="ChEBI" id="CHEBI:29105"/>
        <label>1</label>
    </ligand>
</feature>
<feature type="binding site" evidence="1">
    <location>
        <position position="45"/>
    </location>
    <ligand>
        <name>substrate</name>
    </ligand>
</feature>
<feature type="binding site" description="via carbamate group" evidence="1">
    <location>
        <position position="103"/>
    </location>
    <ligand>
        <name>Zn(2+)</name>
        <dbReference type="ChEBI" id="CHEBI:29105"/>
        <label>1</label>
    </ligand>
</feature>
<feature type="binding site" description="via carbamate group" evidence="1">
    <location>
        <position position="103"/>
    </location>
    <ligand>
        <name>Zn(2+)</name>
        <dbReference type="ChEBI" id="CHEBI:29105"/>
        <label>2</label>
    </ligand>
</feature>
<feature type="binding site" evidence="1">
    <location>
        <position position="140"/>
    </location>
    <ligand>
        <name>substrate</name>
    </ligand>
</feature>
<feature type="binding site" evidence="1">
    <location>
        <position position="140"/>
    </location>
    <ligand>
        <name>Zn(2+)</name>
        <dbReference type="ChEBI" id="CHEBI:29105"/>
        <label>2</label>
    </ligand>
</feature>
<feature type="binding site" evidence="1">
    <location>
        <position position="178"/>
    </location>
    <ligand>
        <name>Zn(2+)</name>
        <dbReference type="ChEBI" id="CHEBI:29105"/>
        <label>2</label>
    </ligand>
</feature>
<feature type="binding site" evidence="1">
    <location>
        <position position="223"/>
    </location>
    <ligand>
        <name>substrate</name>
    </ligand>
</feature>
<feature type="binding site" evidence="1">
    <location>
        <position position="251"/>
    </location>
    <ligand>
        <name>Zn(2+)</name>
        <dbReference type="ChEBI" id="CHEBI:29105"/>
        <label>1</label>
    </ligand>
</feature>
<feature type="binding site" evidence="1">
    <location>
        <position position="255"/>
    </location>
    <ligand>
        <name>substrate</name>
    </ligand>
</feature>
<feature type="binding site" evidence="1">
    <location>
        <position position="267"/>
    </location>
    <ligand>
        <name>substrate</name>
    </ligand>
</feature>
<feature type="modified residue" description="N6-carboxylysine" evidence="1">
    <location>
        <position position="103"/>
    </location>
</feature>
<dbReference type="EC" id="3.5.2.3" evidence="1"/>
<dbReference type="EMBL" id="BX936398">
    <property type="protein sequence ID" value="CAH21720.1"/>
    <property type="molecule type" value="Genomic_DNA"/>
</dbReference>
<dbReference type="RefSeq" id="WP_011192610.1">
    <property type="nucleotide sequence ID" value="NC_006155.1"/>
</dbReference>
<dbReference type="SMR" id="Q669K2"/>
<dbReference type="MEROPS" id="M38.A02"/>
<dbReference type="GeneID" id="49785514"/>
<dbReference type="KEGG" id="ypo:BZ17_4155"/>
<dbReference type="KEGG" id="yps:YPTB2482"/>
<dbReference type="PATRIC" id="fig|273123.14.peg.4377"/>
<dbReference type="UniPathway" id="UPA00070">
    <property type="reaction ID" value="UER00117"/>
</dbReference>
<dbReference type="Proteomes" id="UP000001011">
    <property type="component" value="Chromosome"/>
</dbReference>
<dbReference type="GO" id="GO:0005829">
    <property type="term" value="C:cytosol"/>
    <property type="evidence" value="ECO:0007669"/>
    <property type="project" value="TreeGrafter"/>
</dbReference>
<dbReference type="GO" id="GO:0004151">
    <property type="term" value="F:dihydroorotase activity"/>
    <property type="evidence" value="ECO:0007669"/>
    <property type="project" value="UniProtKB-UniRule"/>
</dbReference>
<dbReference type="GO" id="GO:0008270">
    <property type="term" value="F:zinc ion binding"/>
    <property type="evidence" value="ECO:0007669"/>
    <property type="project" value="UniProtKB-UniRule"/>
</dbReference>
<dbReference type="GO" id="GO:0006207">
    <property type="term" value="P:'de novo' pyrimidine nucleobase biosynthetic process"/>
    <property type="evidence" value="ECO:0007669"/>
    <property type="project" value="TreeGrafter"/>
</dbReference>
<dbReference type="GO" id="GO:0044205">
    <property type="term" value="P:'de novo' UMP biosynthetic process"/>
    <property type="evidence" value="ECO:0007669"/>
    <property type="project" value="UniProtKB-UniRule"/>
</dbReference>
<dbReference type="CDD" id="cd01294">
    <property type="entry name" value="DHOase"/>
    <property type="match status" value="1"/>
</dbReference>
<dbReference type="FunFam" id="3.20.20.140:FF:000006">
    <property type="entry name" value="Dihydroorotase"/>
    <property type="match status" value="1"/>
</dbReference>
<dbReference type="Gene3D" id="3.20.20.140">
    <property type="entry name" value="Metal-dependent hydrolases"/>
    <property type="match status" value="1"/>
</dbReference>
<dbReference type="HAMAP" id="MF_00219">
    <property type="entry name" value="PyrC_classII"/>
    <property type="match status" value="1"/>
</dbReference>
<dbReference type="InterPro" id="IPR006680">
    <property type="entry name" value="Amidohydro-rel"/>
</dbReference>
<dbReference type="InterPro" id="IPR004721">
    <property type="entry name" value="DHOdimr"/>
</dbReference>
<dbReference type="InterPro" id="IPR002195">
    <property type="entry name" value="Dihydroorotase_CS"/>
</dbReference>
<dbReference type="InterPro" id="IPR032466">
    <property type="entry name" value="Metal_Hydrolase"/>
</dbReference>
<dbReference type="NCBIfam" id="TIGR00856">
    <property type="entry name" value="pyrC_dimer"/>
    <property type="match status" value="1"/>
</dbReference>
<dbReference type="PANTHER" id="PTHR43137">
    <property type="entry name" value="DIHYDROOROTASE"/>
    <property type="match status" value="1"/>
</dbReference>
<dbReference type="PANTHER" id="PTHR43137:SF1">
    <property type="entry name" value="DIHYDROOROTASE"/>
    <property type="match status" value="1"/>
</dbReference>
<dbReference type="Pfam" id="PF01979">
    <property type="entry name" value="Amidohydro_1"/>
    <property type="match status" value="1"/>
</dbReference>
<dbReference type="PIRSF" id="PIRSF001237">
    <property type="entry name" value="DHOdimr"/>
    <property type="match status" value="1"/>
</dbReference>
<dbReference type="SUPFAM" id="SSF51556">
    <property type="entry name" value="Metallo-dependent hydrolases"/>
    <property type="match status" value="1"/>
</dbReference>
<dbReference type="PROSITE" id="PS00483">
    <property type="entry name" value="DIHYDROOROTASE_2"/>
    <property type="match status" value="1"/>
</dbReference>
<reference key="1">
    <citation type="journal article" date="2004" name="Proc. Natl. Acad. Sci. U.S.A.">
        <title>Insights into the evolution of Yersinia pestis through whole-genome comparison with Yersinia pseudotuberculosis.</title>
        <authorList>
            <person name="Chain P.S.G."/>
            <person name="Carniel E."/>
            <person name="Larimer F.W."/>
            <person name="Lamerdin J."/>
            <person name="Stoutland P.O."/>
            <person name="Regala W.M."/>
            <person name="Georgescu A.M."/>
            <person name="Vergez L.M."/>
            <person name="Land M.L."/>
            <person name="Motin V.L."/>
            <person name="Brubaker R.R."/>
            <person name="Fowler J."/>
            <person name="Hinnebusch J."/>
            <person name="Marceau M."/>
            <person name="Medigue C."/>
            <person name="Simonet M."/>
            <person name="Chenal-Francisque V."/>
            <person name="Souza B."/>
            <person name="Dacheux D."/>
            <person name="Elliott J.M."/>
            <person name="Derbise A."/>
            <person name="Hauser L.J."/>
            <person name="Garcia E."/>
        </authorList>
    </citation>
    <scope>NUCLEOTIDE SEQUENCE [LARGE SCALE GENOMIC DNA]</scope>
    <source>
        <strain>IP32953</strain>
    </source>
</reference>
<proteinExistence type="inferred from homology"/>
<accession>Q669K2</accession>
<name>PYRC_YERPS</name>
<evidence type="ECO:0000255" key="1">
    <source>
        <dbReference type="HAMAP-Rule" id="MF_00219"/>
    </source>
</evidence>
<comment type="function">
    <text evidence="1">Catalyzes the reversible cyclization of carbamoyl aspartate to dihydroorotate.</text>
</comment>
<comment type="catalytic activity">
    <reaction evidence="1">
        <text>(S)-dihydroorotate + H2O = N-carbamoyl-L-aspartate + H(+)</text>
        <dbReference type="Rhea" id="RHEA:24296"/>
        <dbReference type="ChEBI" id="CHEBI:15377"/>
        <dbReference type="ChEBI" id="CHEBI:15378"/>
        <dbReference type="ChEBI" id="CHEBI:30864"/>
        <dbReference type="ChEBI" id="CHEBI:32814"/>
        <dbReference type="EC" id="3.5.2.3"/>
    </reaction>
</comment>
<comment type="cofactor">
    <cofactor evidence="1">
        <name>Zn(2+)</name>
        <dbReference type="ChEBI" id="CHEBI:29105"/>
    </cofactor>
    <text evidence="1">Binds 2 Zn(2+) ions per subunit.</text>
</comment>
<comment type="pathway">
    <text evidence="1">Pyrimidine metabolism; UMP biosynthesis via de novo pathway; (S)-dihydroorotate from bicarbonate: step 3/3.</text>
</comment>
<comment type="subunit">
    <text evidence="1">Homodimer.</text>
</comment>
<comment type="similarity">
    <text evidence="1">Belongs to the metallo-dependent hydrolases superfamily. DHOase family. Class II DHOase subfamily.</text>
</comment>
<organism>
    <name type="scientific">Yersinia pseudotuberculosis serotype I (strain IP32953)</name>
    <dbReference type="NCBI Taxonomy" id="273123"/>
    <lineage>
        <taxon>Bacteria</taxon>
        <taxon>Pseudomonadati</taxon>
        <taxon>Pseudomonadota</taxon>
        <taxon>Gammaproteobacteria</taxon>
        <taxon>Enterobacterales</taxon>
        <taxon>Yersiniaceae</taxon>
        <taxon>Yersinia</taxon>
    </lineage>
</organism>
<protein>
    <recommendedName>
        <fullName evidence="1">Dihydroorotase</fullName>
        <shortName evidence="1">DHOase</shortName>
        <ecNumber evidence="1">3.5.2.3</ecNumber>
    </recommendedName>
</protein>
<sequence>MTAQPQTLKIRRPDDWHIHLRDDEMLSTVLPYTSEVFARAIVMPNLAQPITTVASAIAYRERILAAVPAGHKFTPLMTCYLTNSLDVKELTTGFEQGVFTAAKLYPANATTNSTHGVSDIPAIYPLFEQMQKIGMPLLIHGEVTDAAVDIFDREARFIDQILEPIRQKFPELKIVFEHITTKDAADYVLAGNRFLGATVTPQHLMFNRNHMLVGGIRPHLFCLPILKRSTHQQALRAAVASGSDRFFLGTDSAPHAKHRKESSCGCAGVFNAPAALPAYASVFEELNALQHLEAFCALNGPRFYGLPVNDDVVELVRTPFLQPEEIPLGNESVIPFLAGQTLNWSVKR</sequence>